<evidence type="ECO:0000250" key="1"/>
<evidence type="ECO:0000256" key="2">
    <source>
        <dbReference type="SAM" id="MobiDB-lite"/>
    </source>
</evidence>
<evidence type="ECO:0000305" key="3"/>
<name>VPS41_SOLLC</name>
<feature type="chain" id="PRO_0000212826" description="Vacuolar protein sorting-associated protein 41 homolog">
    <location>
        <begin position="1"/>
        <end position="960"/>
    </location>
</feature>
<feature type="repeat" description="WD 1">
    <location>
        <begin position="90"/>
        <end position="132"/>
    </location>
</feature>
<feature type="repeat" description="WD 2">
    <location>
        <begin position="178"/>
        <end position="214"/>
    </location>
</feature>
<feature type="repeat" description="CHCR">
    <location>
        <begin position="607"/>
        <end position="754"/>
    </location>
</feature>
<feature type="region of interest" description="Disordered" evidence="2">
    <location>
        <begin position="1"/>
        <end position="39"/>
    </location>
</feature>
<feature type="region of interest" description="Disordered" evidence="2">
    <location>
        <begin position="917"/>
        <end position="948"/>
    </location>
</feature>
<feature type="compositionally biased region" description="Acidic residues" evidence="2">
    <location>
        <begin position="10"/>
        <end position="35"/>
    </location>
</feature>
<feature type="compositionally biased region" description="Acidic residues" evidence="2">
    <location>
        <begin position="928"/>
        <end position="943"/>
    </location>
</feature>
<proteinExistence type="evidence at transcript level"/>
<comment type="function">
    <text evidence="1">Required for vacuolar assembly and vacuolar traffic.</text>
</comment>
<comment type="similarity">
    <text evidence="3">Belongs to the VPS41 family.</text>
</comment>
<reference key="1">
    <citation type="journal article" date="1997" name="Proc. Natl. Acad. Sci. U.S.A.">
        <title>Characterization of VPS41, a gene required for vacuolar trafficking and high-affinity iron transport in yeast.</title>
        <authorList>
            <person name="Radisky D.C."/>
            <person name="Snyder W.B."/>
            <person name="Emr S.D."/>
            <person name="Kaplan J."/>
        </authorList>
    </citation>
    <scope>NUCLEOTIDE SEQUENCE [MRNA]</scope>
</reference>
<organism>
    <name type="scientific">Solanum lycopersicum</name>
    <name type="common">Tomato</name>
    <name type="synonym">Lycopersicon esculentum</name>
    <dbReference type="NCBI Taxonomy" id="4081"/>
    <lineage>
        <taxon>Eukaryota</taxon>
        <taxon>Viridiplantae</taxon>
        <taxon>Streptophyta</taxon>
        <taxon>Embryophyta</taxon>
        <taxon>Tracheophyta</taxon>
        <taxon>Spermatophyta</taxon>
        <taxon>Magnoliopsida</taxon>
        <taxon>eudicotyledons</taxon>
        <taxon>Gunneridae</taxon>
        <taxon>Pentapetalae</taxon>
        <taxon>asterids</taxon>
        <taxon>lamiids</taxon>
        <taxon>Solanales</taxon>
        <taxon>Solanaceae</taxon>
        <taxon>Solanoideae</taxon>
        <taxon>Solaneae</taxon>
        <taxon>Solanum</taxon>
        <taxon>Solanum subgen. Lycopersicon</taxon>
    </lineage>
</organism>
<accession>P93231</accession>
<protein>
    <recommendedName>
        <fullName>Vacuolar protein sorting-associated protein 41 homolog</fullName>
    </recommendedName>
</protein>
<gene>
    <name type="primary">VPS41</name>
</gene>
<sequence>MSPKPSENGIDGDDERDEEEEDSEEEEAEEEEEDEPRLKYQRMGASVPSLLSADAATCIAVAERMIALGTHGGAVHILDFLGNQVKEFAAHTAAVNDLCFDTDGEYVGSCSDDGSVVINSLFTDERMKFEYHRPMKAIALDPDYARTSSRRFVTGGLAGQLYLNVKKWLGYRDQVLHSGEGPIHAVKWRTSLVAWANDTGVKVYDASNDQRITFIERPRGIPRPELLLPHIVWQDDSLLVIGWGTSVKIALIRTTQSKGANGTYKHMSMSSLNQVDIVASFQTSYFISGIAPFGDSLVILAYIPGEEDGEKDFSSTIPSRQGNAQRPEVRVVTWNNDELATDALPVHGFEHYKAKDYSLAHAPFSGSSYAGGQWAAGDEPLYYIVSPKDVVIAKPRDAEDHINWLLQHGWHEKALEAVEANQGQSELLDEVGSRYLDHLIVERKYAEAASLCPKLLRGSASAWERWVFHFAHLRQLPVLVPYIPTENPRLRDTAYEVALVALATNPSFHKDLLSTVKSWPPRIYSTTPVFSAIEPQINTSSMTDPLKEALAELYVIDGQHDKAFALYADLMKPDLFDFIEKHNLHDAVREKVLQLMMIDCKRAVLLLIQQRDLIPPSEVVSQLIAARDKCDYRYFLHLYLHSLFEVNLHAGKDYHDMQVELYADYDPKMLLTFLRSSQHYTLEKAYEICVKKDLLKEQVFILGRMGNAKQALAVIINRLGDIEEAIEFVSMQQDDELWEELIQQSFHKPEMVGVLLEHTVGNLDPLYIVNMLPNDLEIPRLRDRLVKIVTDYRTETSLRHGCNDILKADCVNLLVKYYKEAKRGVCLSDEVDDVSSRRGEKSVSHLGERTMSLKSVEVKSKTRGGGRCCICFDPFSILNVSIIAFFCCHAYHTTCLMESSISVGGKKEAGVAAQRTTSYDEYPNGVNDDYEDEDEEEEEEEDATSGALPMRCILCTTAAG</sequence>
<dbReference type="EMBL" id="U86662">
    <property type="protein sequence ID" value="AAB60857.1"/>
    <property type="molecule type" value="mRNA"/>
</dbReference>
<dbReference type="PIR" id="T07680">
    <property type="entry name" value="T07680"/>
</dbReference>
<dbReference type="SMR" id="P93231"/>
<dbReference type="FunCoup" id="P93231">
    <property type="interactions" value="3324"/>
</dbReference>
<dbReference type="STRING" id="4081.P93231"/>
<dbReference type="PaxDb" id="4081-Solyc06g074740.2.1"/>
<dbReference type="EnsemblPlants" id="Solyc06g074740.3.1">
    <property type="protein sequence ID" value="Solyc06g074740.3.1"/>
    <property type="gene ID" value="Solyc06g074740.3"/>
</dbReference>
<dbReference type="Gramene" id="Solyc06g074740.3.1">
    <property type="protein sequence ID" value="Solyc06g074740.3.1"/>
    <property type="gene ID" value="Solyc06g074740.3"/>
</dbReference>
<dbReference type="KEGG" id="sly:544040"/>
<dbReference type="eggNOG" id="KOG2066">
    <property type="taxonomic scope" value="Eukaryota"/>
</dbReference>
<dbReference type="HOGENOM" id="CLU_001285_2_2_1"/>
<dbReference type="InParanoid" id="P93231"/>
<dbReference type="OMA" id="PQLVWQD"/>
<dbReference type="OrthoDB" id="244107at2759"/>
<dbReference type="PhylomeDB" id="P93231"/>
<dbReference type="Proteomes" id="UP000004994">
    <property type="component" value="Chromosome 6"/>
</dbReference>
<dbReference type="GO" id="GO:0030897">
    <property type="term" value="C:HOPS complex"/>
    <property type="evidence" value="ECO:0000318"/>
    <property type="project" value="GO_Central"/>
</dbReference>
<dbReference type="GO" id="GO:0005770">
    <property type="term" value="C:late endosome"/>
    <property type="evidence" value="ECO:0000318"/>
    <property type="project" value="GO_Central"/>
</dbReference>
<dbReference type="GO" id="GO:0009267">
    <property type="term" value="P:cellular response to starvation"/>
    <property type="evidence" value="ECO:0000318"/>
    <property type="project" value="GO_Central"/>
</dbReference>
<dbReference type="GO" id="GO:0034058">
    <property type="term" value="P:endosomal vesicle fusion"/>
    <property type="evidence" value="ECO:0000318"/>
    <property type="project" value="GO_Central"/>
</dbReference>
<dbReference type="GO" id="GO:0009630">
    <property type="term" value="P:gravitropism"/>
    <property type="evidence" value="ECO:0007669"/>
    <property type="project" value="EnsemblPlants"/>
</dbReference>
<dbReference type="GO" id="GO:0016236">
    <property type="term" value="P:macroautophagy"/>
    <property type="evidence" value="ECO:0000318"/>
    <property type="project" value="GO_Central"/>
</dbReference>
<dbReference type="GO" id="GO:0006623">
    <property type="term" value="P:protein targeting to vacuole"/>
    <property type="evidence" value="ECO:0000318"/>
    <property type="project" value="GO_Central"/>
</dbReference>
<dbReference type="CDD" id="cd16687">
    <property type="entry name" value="RING-H2_Vps8"/>
    <property type="match status" value="1"/>
</dbReference>
<dbReference type="FunFam" id="1.25.40.10:FF:000545">
    <property type="entry name" value="Vacuolar protein sorting-associated protein 41 homolog"/>
    <property type="match status" value="1"/>
</dbReference>
<dbReference type="FunFam" id="2.130.10.10:FF:003152">
    <property type="entry name" value="Vacuolar protein sorting-associated protein 41 homolog"/>
    <property type="match status" value="1"/>
</dbReference>
<dbReference type="Gene3D" id="1.25.40.10">
    <property type="entry name" value="Tetratricopeptide repeat domain"/>
    <property type="match status" value="1"/>
</dbReference>
<dbReference type="Gene3D" id="2.130.10.10">
    <property type="entry name" value="YVTN repeat-like/Quinoprotein amine dehydrogenase"/>
    <property type="match status" value="1"/>
</dbReference>
<dbReference type="InterPro" id="IPR000547">
    <property type="entry name" value="Clathrin_H-chain/VPS_repeat"/>
</dbReference>
<dbReference type="InterPro" id="IPR011990">
    <property type="entry name" value="TPR-like_helical_dom_sf"/>
</dbReference>
<dbReference type="InterPro" id="IPR016902">
    <property type="entry name" value="VPS41"/>
</dbReference>
<dbReference type="InterPro" id="IPR045111">
    <property type="entry name" value="Vps41/Vps8"/>
</dbReference>
<dbReference type="InterPro" id="IPR015943">
    <property type="entry name" value="WD40/YVTN_repeat-like_dom_sf"/>
</dbReference>
<dbReference type="InterPro" id="IPR036322">
    <property type="entry name" value="WD40_repeat_dom_sf"/>
</dbReference>
<dbReference type="InterPro" id="IPR001680">
    <property type="entry name" value="WD40_rpt"/>
</dbReference>
<dbReference type="PANTHER" id="PTHR12616">
    <property type="entry name" value="VACUOLAR PROTEIN SORTING VPS41"/>
    <property type="match status" value="1"/>
</dbReference>
<dbReference type="PANTHER" id="PTHR12616:SF13">
    <property type="entry name" value="VACUOLAR PROTEIN SORTING-ASSOCIATED PROTEIN 41 HOMOLOG"/>
    <property type="match status" value="1"/>
</dbReference>
<dbReference type="Pfam" id="PF23411">
    <property type="entry name" value="Beta-prop_Vps41"/>
    <property type="match status" value="1"/>
</dbReference>
<dbReference type="Pfam" id="PF23556">
    <property type="entry name" value="TPR_Vps41"/>
    <property type="match status" value="1"/>
</dbReference>
<dbReference type="Pfam" id="PF23555">
    <property type="entry name" value="zf-RING_Vps41"/>
    <property type="match status" value="1"/>
</dbReference>
<dbReference type="PIRSF" id="PIRSF028921">
    <property type="entry name" value="VPS41"/>
    <property type="match status" value="1"/>
</dbReference>
<dbReference type="SMART" id="SM00299">
    <property type="entry name" value="CLH"/>
    <property type="match status" value="1"/>
</dbReference>
<dbReference type="SMART" id="SM00320">
    <property type="entry name" value="WD40"/>
    <property type="match status" value="2"/>
</dbReference>
<dbReference type="SUPFAM" id="SSF50978">
    <property type="entry name" value="WD40 repeat-like"/>
    <property type="match status" value="1"/>
</dbReference>
<dbReference type="PROSITE" id="PS50236">
    <property type="entry name" value="CHCR"/>
    <property type="match status" value="1"/>
</dbReference>
<keyword id="KW-0653">Protein transport</keyword>
<keyword id="KW-1185">Reference proteome</keyword>
<keyword id="KW-0677">Repeat</keyword>
<keyword id="KW-0813">Transport</keyword>
<keyword id="KW-0853">WD repeat</keyword>